<proteinExistence type="inferred from homology"/>
<name>CH60_BUCAT</name>
<comment type="function">
    <text evidence="1">Together with its co-chaperonin GroES, plays an essential role in assisting protein folding. The GroEL-GroES system forms a nano-cage that allows encapsulation of the non-native substrate proteins and provides a physical environment optimized to promote and accelerate protein folding.</text>
</comment>
<comment type="catalytic activity">
    <reaction evidence="1">
        <text>ATP + H2O + a folded polypeptide = ADP + phosphate + an unfolded polypeptide.</text>
        <dbReference type="EC" id="5.6.1.7"/>
    </reaction>
</comment>
<comment type="subunit">
    <text evidence="1">Forms a cylinder of 14 subunits composed of two heptameric rings stacked back-to-back. Interacts with the co-chaperonin GroES.</text>
</comment>
<comment type="subcellular location">
    <subcellularLocation>
        <location evidence="1">Cytoplasm</location>
    </subcellularLocation>
</comment>
<comment type="similarity">
    <text evidence="1">Belongs to the chaperonin (HSP60) family.</text>
</comment>
<evidence type="ECO:0000255" key="1">
    <source>
        <dbReference type="HAMAP-Rule" id="MF_00600"/>
    </source>
</evidence>
<evidence type="ECO:0000256" key="2">
    <source>
        <dbReference type="SAM" id="MobiDB-lite"/>
    </source>
</evidence>
<keyword id="KW-0067">ATP-binding</keyword>
<keyword id="KW-0143">Chaperone</keyword>
<keyword id="KW-0963">Cytoplasm</keyword>
<keyword id="KW-0413">Isomerase</keyword>
<keyword id="KW-0547">Nucleotide-binding</keyword>
<accession>B8D6T6</accession>
<sequence length="548" mass="57910">MAAKDVKFGNEARIKMLRGVNVLADAVKVTLGPKGRNVVLDKSFGAPSITKDGVSVAREIELEDKFENMGAQMVKEVASKANDAAGDGTTTATLLAQSIVNEGLKAVAAGMNPMDLKRGIDKAVISAVEELKHLSVPCSDSKAITQVGTISANADEKVGSLIAEAMEKVGNDGVITVEEGTGLQDELEVVKGMQFDRGYLSPYFINKPETGIVELENPYILMADKKISNVREMLPILESVAKSGKPLLIISEDLEGEALATLVVNSMRGIVKVAAVKAPGFGDRRKAMLQDISILTGGSVISEELAMELEKSTLEDLGQAKRVVISKDTTTIIGGVGEKHSIQSRISQIRQEIQEATSDYDKEKLNERLAKLSGGVAVLKVGAATEVEMKEKKARVEDALHATRAAVEEGVVAGGGVALVRVAGKIADLRGQNEDQNVGIRVALRAMEAPLRQIVSNSGEEPSVVTNNVKDGKGNYGYNAATDKYGDMIDFGILDPTKVTRSALQYAASVAGLMITTECMVTDLPKEDKSSDSSSSPAGGMGGMGGMM</sequence>
<feature type="chain" id="PRO_1000147022" description="Chaperonin GroEL">
    <location>
        <begin position="1"/>
        <end position="548"/>
    </location>
</feature>
<feature type="region of interest" description="Disordered" evidence="2">
    <location>
        <begin position="524"/>
        <end position="548"/>
    </location>
</feature>
<feature type="compositionally biased region" description="Gly residues" evidence="2">
    <location>
        <begin position="539"/>
        <end position="548"/>
    </location>
</feature>
<feature type="binding site" evidence="1">
    <location>
        <begin position="30"/>
        <end position="33"/>
    </location>
    <ligand>
        <name>ATP</name>
        <dbReference type="ChEBI" id="CHEBI:30616"/>
    </ligand>
</feature>
<feature type="binding site" evidence="1">
    <location>
        <position position="51"/>
    </location>
    <ligand>
        <name>ATP</name>
        <dbReference type="ChEBI" id="CHEBI:30616"/>
    </ligand>
</feature>
<feature type="binding site" evidence="1">
    <location>
        <begin position="87"/>
        <end position="91"/>
    </location>
    <ligand>
        <name>ATP</name>
        <dbReference type="ChEBI" id="CHEBI:30616"/>
    </ligand>
</feature>
<feature type="binding site" evidence="1">
    <location>
        <position position="415"/>
    </location>
    <ligand>
        <name>ATP</name>
        <dbReference type="ChEBI" id="CHEBI:30616"/>
    </ligand>
</feature>
<feature type="binding site" evidence="1">
    <location>
        <begin position="479"/>
        <end position="481"/>
    </location>
    <ligand>
        <name>ATP</name>
        <dbReference type="ChEBI" id="CHEBI:30616"/>
    </ligand>
</feature>
<feature type="binding site" evidence="1">
    <location>
        <position position="495"/>
    </location>
    <ligand>
        <name>ATP</name>
        <dbReference type="ChEBI" id="CHEBI:30616"/>
    </ligand>
</feature>
<gene>
    <name evidence="1" type="primary">groEL</name>
    <name evidence="1" type="synonym">groL</name>
    <name type="ordered locus">BUAPTUC7_019</name>
</gene>
<dbReference type="EC" id="5.6.1.7" evidence="1"/>
<dbReference type="EMBL" id="CP001158">
    <property type="protein sequence ID" value="ACL29851.1"/>
    <property type="molecule type" value="Genomic_DNA"/>
</dbReference>
<dbReference type="RefSeq" id="WP_012619403.1">
    <property type="nucleotide sequence ID" value="NC_011834.1"/>
</dbReference>
<dbReference type="SMR" id="B8D6T6"/>
<dbReference type="KEGG" id="bau:BUAPTUC7_019"/>
<dbReference type="HOGENOM" id="CLU_016503_3_0_6"/>
<dbReference type="GO" id="GO:0005737">
    <property type="term" value="C:cytoplasm"/>
    <property type="evidence" value="ECO:0007669"/>
    <property type="project" value="UniProtKB-SubCell"/>
</dbReference>
<dbReference type="GO" id="GO:0005524">
    <property type="term" value="F:ATP binding"/>
    <property type="evidence" value="ECO:0007669"/>
    <property type="project" value="UniProtKB-UniRule"/>
</dbReference>
<dbReference type="GO" id="GO:0140662">
    <property type="term" value="F:ATP-dependent protein folding chaperone"/>
    <property type="evidence" value="ECO:0007669"/>
    <property type="project" value="InterPro"/>
</dbReference>
<dbReference type="GO" id="GO:0016853">
    <property type="term" value="F:isomerase activity"/>
    <property type="evidence" value="ECO:0007669"/>
    <property type="project" value="UniProtKB-KW"/>
</dbReference>
<dbReference type="GO" id="GO:0051082">
    <property type="term" value="F:unfolded protein binding"/>
    <property type="evidence" value="ECO:0007669"/>
    <property type="project" value="UniProtKB-UniRule"/>
</dbReference>
<dbReference type="GO" id="GO:0042026">
    <property type="term" value="P:protein refolding"/>
    <property type="evidence" value="ECO:0007669"/>
    <property type="project" value="UniProtKB-UniRule"/>
</dbReference>
<dbReference type="CDD" id="cd03344">
    <property type="entry name" value="GroEL"/>
    <property type="match status" value="1"/>
</dbReference>
<dbReference type="FunFam" id="1.10.560.10:FF:000001">
    <property type="entry name" value="60 kDa chaperonin"/>
    <property type="match status" value="1"/>
</dbReference>
<dbReference type="FunFam" id="3.50.7.10:FF:000001">
    <property type="entry name" value="60 kDa chaperonin"/>
    <property type="match status" value="1"/>
</dbReference>
<dbReference type="Gene3D" id="3.50.7.10">
    <property type="entry name" value="GroEL"/>
    <property type="match status" value="1"/>
</dbReference>
<dbReference type="Gene3D" id="1.10.560.10">
    <property type="entry name" value="GroEL-like equatorial domain"/>
    <property type="match status" value="1"/>
</dbReference>
<dbReference type="Gene3D" id="3.30.260.10">
    <property type="entry name" value="TCP-1-like chaperonin intermediate domain"/>
    <property type="match status" value="1"/>
</dbReference>
<dbReference type="HAMAP" id="MF_00600">
    <property type="entry name" value="CH60"/>
    <property type="match status" value="1"/>
</dbReference>
<dbReference type="InterPro" id="IPR018370">
    <property type="entry name" value="Chaperonin_Cpn60_CS"/>
</dbReference>
<dbReference type="InterPro" id="IPR001844">
    <property type="entry name" value="Cpn60/GroEL"/>
</dbReference>
<dbReference type="InterPro" id="IPR002423">
    <property type="entry name" value="Cpn60/GroEL/TCP-1"/>
</dbReference>
<dbReference type="InterPro" id="IPR027409">
    <property type="entry name" value="GroEL-like_apical_dom_sf"/>
</dbReference>
<dbReference type="InterPro" id="IPR027413">
    <property type="entry name" value="GROEL-like_equatorial_sf"/>
</dbReference>
<dbReference type="InterPro" id="IPR027410">
    <property type="entry name" value="TCP-1-like_intermed_sf"/>
</dbReference>
<dbReference type="NCBIfam" id="TIGR02348">
    <property type="entry name" value="GroEL"/>
    <property type="match status" value="1"/>
</dbReference>
<dbReference type="NCBIfam" id="NF000592">
    <property type="entry name" value="PRK00013.1"/>
    <property type="match status" value="1"/>
</dbReference>
<dbReference type="NCBIfam" id="NF009487">
    <property type="entry name" value="PRK12849.1"/>
    <property type="match status" value="1"/>
</dbReference>
<dbReference type="NCBIfam" id="NF009488">
    <property type="entry name" value="PRK12850.1"/>
    <property type="match status" value="1"/>
</dbReference>
<dbReference type="NCBIfam" id="NF009489">
    <property type="entry name" value="PRK12851.1"/>
    <property type="match status" value="1"/>
</dbReference>
<dbReference type="PANTHER" id="PTHR45633">
    <property type="entry name" value="60 KDA HEAT SHOCK PROTEIN, MITOCHONDRIAL"/>
    <property type="match status" value="1"/>
</dbReference>
<dbReference type="Pfam" id="PF00118">
    <property type="entry name" value="Cpn60_TCP1"/>
    <property type="match status" value="1"/>
</dbReference>
<dbReference type="PRINTS" id="PR00298">
    <property type="entry name" value="CHAPERONIN60"/>
</dbReference>
<dbReference type="SUPFAM" id="SSF52029">
    <property type="entry name" value="GroEL apical domain-like"/>
    <property type="match status" value="1"/>
</dbReference>
<dbReference type="SUPFAM" id="SSF48592">
    <property type="entry name" value="GroEL equatorial domain-like"/>
    <property type="match status" value="1"/>
</dbReference>
<dbReference type="SUPFAM" id="SSF54849">
    <property type="entry name" value="GroEL-intermediate domain like"/>
    <property type="match status" value="1"/>
</dbReference>
<dbReference type="PROSITE" id="PS00296">
    <property type="entry name" value="CHAPERONINS_CPN60"/>
    <property type="match status" value="1"/>
</dbReference>
<protein>
    <recommendedName>
        <fullName evidence="1">Chaperonin GroEL</fullName>
        <ecNumber evidence="1">5.6.1.7</ecNumber>
    </recommendedName>
    <alternativeName>
        <fullName evidence="1">60 kDa chaperonin</fullName>
    </alternativeName>
    <alternativeName>
        <fullName evidence="1">Chaperonin-60</fullName>
        <shortName evidence="1">Cpn60</shortName>
    </alternativeName>
</protein>
<organism>
    <name type="scientific">Buchnera aphidicola subsp. Acyrthosiphon pisum (strain Tuc7)</name>
    <dbReference type="NCBI Taxonomy" id="561501"/>
    <lineage>
        <taxon>Bacteria</taxon>
        <taxon>Pseudomonadati</taxon>
        <taxon>Pseudomonadota</taxon>
        <taxon>Gammaproteobacteria</taxon>
        <taxon>Enterobacterales</taxon>
        <taxon>Erwiniaceae</taxon>
        <taxon>Buchnera</taxon>
    </lineage>
</organism>
<reference key="1">
    <citation type="journal article" date="2009" name="Science">
        <title>The dynamics and time scale of ongoing genomic erosion in symbiotic bacteria.</title>
        <authorList>
            <person name="Moran N.A."/>
            <person name="McLaughlin H.J."/>
            <person name="Sorek R."/>
        </authorList>
    </citation>
    <scope>NUCLEOTIDE SEQUENCE [LARGE SCALE GENOMIC DNA]</scope>
    <source>
        <strain>Tuc7</strain>
    </source>
</reference>